<dbReference type="EC" id="2.7.13.3"/>
<dbReference type="EMBL" id="CP000029">
    <property type="protein sequence ID" value="AAW53762.1"/>
    <property type="status" value="ALT_INIT"/>
    <property type="molecule type" value="Genomic_DNA"/>
</dbReference>
<dbReference type="SMR" id="Q5HR29"/>
<dbReference type="STRING" id="176279.SERP0364"/>
<dbReference type="KEGG" id="ser:SERP0364"/>
<dbReference type="eggNOG" id="COG5002">
    <property type="taxonomic scope" value="Bacteria"/>
</dbReference>
<dbReference type="HOGENOM" id="CLU_000445_89_3_9"/>
<dbReference type="Proteomes" id="UP000000531">
    <property type="component" value="Chromosome"/>
</dbReference>
<dbReference type="GO" id="GO:0005886">
    <property type="term" value="C:plasma membrane"/>
    <property type="evidence" value="ECO:0007669"/>
    <property type="project" value="UniProtKB-SubCell"/>
</dbReference>
<dbReference type="GO" id="GO:0005524">
    <property type="term" value="F:ATP binding"/>
    <property type="evidence" value="ECO:0007669"/>
    <property type="project" value="UniProtKB-KW"/>
</dbReference>
<dbReference type="GO" id="GO:0004721">
    <property type="term" value="F:phosphoprotein phosphatase activity"/>
    <property type="evidence" value="ECO:0007669"/>
    <property type="project" value="TreeGrafter"/>
</dbReference>
<dbReference type="GO" id="GO:0000155">
    <property type="term" value="F:phosphorelay sensor kinase activity"/>
    <property type="evidence" value="ECO:0007669"/>
    <property type="project" value="InterPro"/>
</dbReference>
<dbReference type="GO" id="GO:0016036">
    <property type="term" value="P:cellular response to phosphate starvation"/>
    <property type="evidence" value="ECO:0007669"/>
    <property type="project" value="TreeGrafter"/>
</dbReference>
<dbReference type="CDD" id="cd00082">
    <property type="entry name" value="HisKA"/>
    <property type="match status" value="1"/>
</dbReference>
<dbReference type="Gene3D" id="1.10.287.130">
    <property type="match status" value="1"/>
</dbReference>
<dbReference type="Gene3D" id="3.30.565.10">
    <property type="entry name" value="Histidine kinase-like ATPase, C-terminal domain"/>
    <property type="match status" value="1"/>
</dbReference>
<dbReference type="InterPro" id="IPR050351">
    <property type="entry name" value="2-comp_sensor_kinase"/>
</dbReference>
<dbReference type="InterPro" id="IPR036890">
    <property type="entry name" value="HATPase_C_sf"/>
</dbReference>
<dbReference type="InterPro" id="IPR005467">
    <property type="entry name" value="His_kinase_dom"/>
</dbReference>
<dbReference type="InterPro" id="IPR003661">
    <property type="entry name" value="HisK_dim/P_dom"/>
</dbReference>
<dbReference type="InterPro" id="IPR036097">
    <property type="entry name" value="HisK_dim/P_sf"/>
</dbReference>
<dbReference type="InterPro" id="IPR004358">
    <property type="entry name" value="Sig_transdc_His_kin-like_C"/>
</dbReference>
<dbReference type="PANTHER" id="PTHR45453">
    <property type="entry name" value="PHOSPHATE REGULON SENSOR PROTEIN PHOR"/>
    <property type="match status" value="1"/>
</dbReference>
<dbReference type="PANTHER" id="PTHR45453:SF1">
    <property type="entry name" value="PHOSPHATE REGULON SENSOR PROTEIN PHOR"/>
    <property type="match status" value="1"/>
</dbReference>
<dbReference type="Pfam" id="PF02518">
    <property type="entry name" value="HATPase_c"/>
    <property type="match status" value="1"/>
</dbReference>
<dbReference type="Pfam" id="PF00512">
    <property type="entry name" value="HisKA"/>
    <property type="match status" value="1"/>
</dbReference>
<dbReference type="PRINTS" id="PR00344">
    <property type="entry name" value="BCTRLSENSOR"/>
</dbReference>
<dbReference type="SMART" id="SM00387">
    <property type="entry name" value="HATPase_c"/>
    <property type="match status" value="1"/>
</dbReference>
<dbReference type="SMART" id="SM00388">
    <property type="entry name" value="HisKA"/>
    <property type="match status" value="1"/>
</dbReference>
<dbReference type="SUPFAM" id="SSF55874">
    <property type="entry name" value="ATPase domain of HSP90 chaperone/DNA topoisomerase II/histidine kinase"/>
    <property type="match status" value="1"/>
</dbReference>
<dbReference type="SUPFAM" id="SSF47384">
    <property type="entry name" value="Homodimeric domain of signal transducing histidine kinase"/>
    <property type="match status" value="1"/>
</dbReference>
<dbReference type="PROSITE" id="PS50109">
    <property type="entry name" value="HIS_KIN"/>
    <property type="match status" value="1"/>
</dbReference>
<evidence type="ECO:0000250" key="1"/>
<evidence type="ECO:0000255" key="2"/>
<evidence type="ECO:0000255" key="3">
    <source>
        <dbReference type="PROSITE-ProRule" id="PRU00107"/>
    </source>
</evidence>
<evidence type="ECO:0000305" key="4"/>
<comment type="function">
    <text evidence="1">Member of the two-component regulatory system SaeR/SaeS. Probably functions as a membrane-associated protein kinase that upon sensing the appropriate signal, autophosphorylates and in turn activates the cytosolic response regulator SaeR (By similarity).</text>
</comment>
<comment type="catalytic activity">
    <reaction>
        <text>ATP + protein L-histidine = ADP + protein N-phospho-L-histidine.</text>
        <dbReference type="EC" id="2.7.13.3"/>
    </reaction>
</comment>
<comment type="subcellular location">
    <subcellularLocation>
        <location evidence="1">Cell membrane</location>
        <topology evidence="1">Multi-pass membrane protein</topology>
    </subcellularLocation>
</comment>
<comment type="PTM">
    <text evidence="1">Autophosphorylated.</text>
</comment>
<comment type="sequence caution" evidence="4">
    <conflict type="erroneous initiation">
        <sequence resource="EMBL-CDS" id="AAW53762"/>
    </conflict>
</comment>
<protein>
    <recommendedName>
        <fullName>Histidine protein kinase SaeS</fullName>
        <ecNumber>2.7.13.3</ecNumber>
    </recommendedName>
    <alternativeName>
        <fullName>Sensor protein SaeS</fullName>
    </alternativeName>
</protein>
<organism>
    <name type="scientific">Staphylococcus epidermidis (strain ATCC 35984 / DSM 28319 / BCRC 17069 / CCUG 31568 / BM 3577 / RP62A)</name>
    <dbReference type="NCBI Taxonomy" id="176279"/>
    <lineage>
        <taxon>Bacteria</taxon>
        <taxon>Bacillati</taxon>
        <taxon>Bacillota</taxon>
        <taxon>Bacilli</taxon>
        <taxon>Bacillales</taxon>
        <taxon>Staphylococcaceae</taxon>
        <taxon>Staphylococcus</taxon>
    </lineage>
</organism>
<name>SAES_STAEQ</name>
<accession>Q5HR29</accession>
<gene>
    <name type="primary">saeS</name>
    <name type="ordered locus">SERP0364</name>
</gene>
<reference key="1">
    <citation type="journal article" date="2005" name="J. Bacteriol.">
        <title>Insights on evolution of virulence and resistance from the complete genome analysis of an early methicillin-resistant Staphylococcus aureus strain and a biofilm-producing methicillin-resistant Staphylococcus epidermidis strain.</title>
        <authorList>
            <person name="Gill S.R."/>
            <person name="Fouts D.E."/>
            <person name="Archer G.L."/>
            <person name="Mongodin E.F."/>
            <person name="DeBoy R.T."/>
            <person name="Ravel J."/>
            <person name="Paulsen I.T."/>
            <person name="Kolonay J.F."/>
            <person name="Brinkac L.M."/>
            <person name="Beanan M.J."/>
            <person name="Dodson R.J."/>
            <person name="Daugherty S.C."/>
            <person name="Madupu R."/>
            <person name="Angiuoli S.V."/>
            <person name="Durkin A.S."/>
            <person name="Haft D.H."/>
            <person name="Vamathevan J.J."/>
            <person name="Khouri H."/>
            <person name="Utterback T.R."/>
            <person name="Lee C."/>
            <person name="Dimitrov G."/>
            <person name="Jiang L."/>
            <person name="Qin H."/>
            <person name="Weidman J."/>
            <person name="Tran K."/>
            <person name="Kang K.H."/>
            <person name="Hance I.R."/>
            <person name="Nelson K.E."/>
            <person name="Fraser C.M."/>
        </authorList>
    </citation>
    <scope>NUCLEOTIDE SEQUENCE [LARGE SCALE GENOMIC DNA]</scope>
    <source>
        <strain>ATCC 35984 / DSM 28319 / BCRC 17069 / CCUG 31568 / BM 3577 / RP62A</strain>
    </source>
</reference>
<keyword id="KW-0067">ATP-binding</keyword>
<keyword id="KW-1003">Cell membrane</keyword>
<keyword id="KW-0418">Kinase</keyword>
<keyword id="KW-0472">Membrane</keyword>
<keyword id="KW-0547">Nucleotide-binding</keyword>
<keyword id="KW-0597">Phosphoprotein</keyword>
<keyword id="KW-1185">Reference proteome</keyword>
<keyword id="KW-0808">Transferase</keyword>
<keyword id="KW-0812">Transmembrane</keyword>
<keyword id="KW-1133">Transmembrane helix</keyword>
<keyword id="KW-0902">Two-component regulatory system</keyword>
<feature type="chain" id="PRO_0000295940" description="Histidine protein kinase SaeS">
    <location>
        <begin position="1"/>
        <end position="352"/>
    </location>
</feature>
<feature type="transmembrane region" description="Helical" evidence="2">
    <location>
        <begin position="9"/>
        <end position="29"/>
    </location>
</feature>
<feature type="transmembrane region" description="Helical" evidence="2">
    <location>
        <begin position="41"/>
        <end position="61"/>
    </location>
</feature>
<feature type="domain" description="Histidine kinase" evidence="3">
    <location>
        <begin position="130"/>
        <end position="349"/>
    </location>
</feature>
<feature type="modified residue" description="Phosphohistidine; by autocatalysis" evidence="3">
    <location>
        <position position="133"/>
    </location>
</feature>
<proteinExistence type="inferred from homology"/>
<sequence length="352" mass="40285">MTIFSIRSQIIIGVISSVILTTIILVIAYKLMWFNGHMTLTLAITTMITSCLTLSICSIFINPLIQKIKQFNIKTKQFINHEKFIDDETFQSPREIKELNDSFNKMAYEINNQMNMIKNEQQEKTEIIQNLAHDLKTPLAGIRSYSEGLRDGVISDPQEVHEAYEILIKQANRLSILFDDITHVINLNTGRSYPLELIQLDQLLVNILQPYEQHIKQENRTLEVNFCTDIDAFYQYRPPIERILTNLLDNALKFSNSGSRIDIIISECKENDVISISIKDEGIGIVPELQSRIFERTFRVEDSRNTKTGGSGLGLYIANELAQQIDASITVQSDLDIGTTMTLTLKKFQFKK</sequence>